<protein>
    <recommendedName>
        <fullName evidence="1">Phosphoribosylformylglycinamidine synthase subunit PurL</fullName>
        <shortName evidence="1">FGAM synthase</shortName>
        <ecNumber evidence="1">6.3.5.3</ecNumber>
    </recommendedName>
    <alternativeName>
        <fullName evidence="1">Formylglycinamide ribonucleotide amidotransferase subunit II</fullName>
        <shortName evidence="1">FGAR amidotransferase II</shortName>
        <shortName evidence="1">FGAR-AT II</shortName>
    </alternativeName>
    <alternativeName>
        <fullName evidence="1">Glutamine amidotransferase PurL</fullName>
    </alternativeName>
    <alternativeName>
        <fullName evidence="1">Phosphoribosylformylglycinamidine synthase subunit II</fullName>
    </alternativeName>
</protein>
<keyword id="KW-0067">ATP-binding</keyword>
<keyword id="KW-0963">Cytoplasm</keyword>
<keyword id="KW-0436">Ligase</keyword>
<keyword id="KW-0460">Magnesium</keyword>
<keyword id="KW-0479">Metal-binding</keyword>
<keyword id="KW-0547">Nucleotide-binding</keyword>
<keyword id="KW-0658">Purine biosynthesis</keyword>
<keyword id="KW-1185">Reference proteome</keyword>
<dbReference type="EC" id="6.3.5.3" evidence="1"/>
<dbReference type="EMBL" id="AL939118">
    <property type="protein sequence ID" value="CAB56359.1"/>
    <property type="molecule type" value="Genomic_DNA"/>
</dbReference>
<dbReference type="RefSeq" id="NP_628260.1">
    <property type="nucleotide sequence ID" value="NC_003888.3"/>
</dbReference>
<dbReference type="RefSeq" id="WP_003974893.1">
    <property type="nucleotide sequence ID" value="NZ_VNID01000030.1"/>
</dbReference>
<dbReference type="SMR" id="Q9RKK5"/>
<dbReference type="FunCoup" id="Q9RKK5">
    <property type="interactions" value="317"/>
</dbReference>
<dbReference type="STRING" id="100226.gene:17761714"/>
<dbReference type="PaxDb" id="100226-SCO4079"/>
<dbReference type="GeneID" id="91384964"/>
<dbReference type="KEGG" id="sco:SCO4079"/>
<dbReference type="PATRIC" id="fig|100226.15.peg.4138"/>
<dbReference type="eggNOG" id="COG0046">
    <property type="taxonomic scope" value="Bacteria"/>
</dbReference>
<dbReference type="HOGENOM" id="CLU_003100_0_1_11"/>
<dbReference type="InParanoid" id="Q9RKK5"/>
<dbReference type="OrthoDB" id="9804441at2"/>
<dbReference type="PhylomeDB" id="Q9RKK5"/>
<dbReference type="UniPathway" id="UPA00074">
    <property type="reaction ID" value="UER00128"/>
</dbReference>
<dbReference type="Proteomes" id="UP000001973">
    <property type="component" value="Chromosome"/>
</dbReference>
<dbReference type="GO" id="GO:0005737">
    <property type="term" value="C:cytoplasm"/>
    <property type="evidence" value="ECO:0007669"/>
    <property type="project" value="UniProtKB-SubCell"/>
</dbReference>
<dbReference type="GO" id="GO:0005524">
    <property type="term" value="F:ATP binding"/>
    <property type="evidence" value="ECO:0007669"/>
    <property type="project" value="UniProtKB-UniRule"/>
</dbReference>
<dbReference type="GO" id="GO:0000287">
    <property type="term" value="F:magnesium ion binding"/>
    <property type="evidence" value="ECO:0007669"/>
    <property type="project" value="UniProtKB-UniRule"/>
</dbReference>
<dbReference type="GO" id="GO:0004642">
    <property type="term" value="F:phosphoribosylformylglycinamidine synthase activity"/>
    <property type="evidence" value="ECO:0000318"/>
    <property type="project" value="GO_Central"/>
</dbReference>
<dbReference type="GO" id="GO:0006189">
    <property type="term" value="P:'de novo' IMP biosynthetic process"/>
    <property type="evidence" value="ECO:0007669"/>
    <property type="project" value="UniProtKB-UniRule"/>
</dbReference>
<dbReference type="GO" id="GO:0006164">
    <property type="term" value="P:purine nucleotide biosynthetic process"/>
    <property type="evidence" value="ECO:0000318"/>
    <property type="project" value="GO_Central"/>
</dbReference>
<dbReference type="CDD" id="cd02203">
    <property type="entry name" value="PurL_repeat1"/>
    <property type="match status" value="1"/>
</dbReference>
<dbReference type="CDD" id="cd02204">
    <property type="entry name" value="PurL_repeat2"/>
    <property type="match status" value="1"/>
</dbReference>
<dbReference type="FunFam" id="3.30.1330.10:FF:000004">
    <property type="entry name" value="Phosphoribosylformylglycinamidine synthase subunit PurL"/>
    <property type="match status" value="1"/>
</dbReference>
<dbReference type="Gene3D" id="3.90.650.10">
    <property type="entry name" value="PurM-like C-terminal domain"/>
    <property type="match status" value="2"/>
</dbReference>
<dbReference type="Gene3D" id="3.30.1330.10">
    <property type="entry name" value="PurM-like, N-terminal domain"/>
    <property type="match status" value="2"/>
</dbReference>
<dbReference type="HAMAP" id="MF_00420">
    <property type="entry name" value="PurL_2"/>
    <property type="match status" value="1"/>
</dbReference>
<dbReference type="InterPro" id="IPR010074">
    <property type="entry name" value="PRibForGlyAmidine_synth_PurL"/>
</dbReference>
<dbReference type="InterPro" id="IPR041609">
    <property type="entry name" value="PurL_linker"/>
</dbReference>
<dbReference type="InterPro" id="IPR010918">
    <property type="entry name" value="PurM-like_C_dom"/>
</dbReference>
<dbReference type="InterPro" id="IPR036676">
    <property type="entry name" value="PurM-like_C_sf"/>
</dbReference>
<dbReference type="InterPro" id="IPR016188">
    <property type="entry name" value="PurM-like_N"/>
</dbReference>
<dbReference type="InterPro" id="IPR036921">
    <property type="entry name" value="PurM-like_N_sf"/>
</dbReference>
<dbReference type="NCBIfam" id="TIGR01736">
    <property type="entry name" value="FGAM_synth_II"/>
    <property type="match status" value="1"/>
</dbReference>
<dbReference type="NCBIfam" id="NF002290">
    <property type="entry name" value="PRK01213.1"/>
    <property type="match status" value="1"/>
</dbReference>
<dbReference type="PANTHER" id="PTHR43555">
    <property type="entry name" value="PHOSPHORIBOSYLFORMYLGLYCINAMIDINE SYNTHASE SUBUNIT PURL"/>
    <property type="match status" value="1"/>
</dbReference>
<dbReference type="PANTHER" id="PTHR43555:SF1">
    <property type="entry name" value="PHOSPHORIBOSYLFORMYLGLYCINAMIDINE SYNTHASE SUBUNIT PURL"/>
    <property type="match status" value="1"/>
</dbReference>
<dbReference type="Pfam" id="PF00586">
    <property type="entry name" value="AIRS"/>
    <property type="match status" value="2"/>
</dbReference>
<dbReference type="Pfam" id="PF02769">
    <property type="entry name" value="AIRS_C"/>
    <property type="match status" value="2"/>
</dbReference>
<dbReference type="Pfam" id="PF18072">
    <property type="entry name" value="FGAR-AT_linker"/>
    <property type="match status" value="1"/>
</dbReference>
<dbReference type="PIRSF" id="PIRSF001587">
    <property type="entry name" value="FGAM_synthase_II"/>
    <property type="match status" value="1"/>
</dbReference>
<dbReference type="SUPFAM" id="SSF56042">
    <property type="entry name" value="PurM C-terminal domain-like"/>
    <property type="match status" value="2"/>
</dbReference>
<dbReference type="SUPFAM" id="SSF55326">
    <property type="entry name" value="PurM N-terminal domain-like"/>
    <property type="match status" value="2"/>
</dbReference>
<organism>
    <name type="scientific">Streptomyces coelicolor (strain ATCC BAA-471 / A3(2) / M145)</name>
    <dbReference type="NCBI Taxonomy" id="100226"/>
    <lineage>
        <taxon>Bacteria</taxon>
        <taxon>Bacillati</taxon>
        <taxon>Actinomycetota</taxon>
        <taxon>Actinomycetes</taxon>
        <taxon>Kitasatosporales</taxon>
        <taxon>Streptomycetaceae</taxon>
        <taxon>Streptomyces</taxon>
        <taxon>Streptomyces albidoflavus group</taxon>
    </lineage>
</organism>
<sequence>MSRTPLDTVEHATATPDVELPWAELGLKKDEYERVVEILGRRPTGAELAMYSVMWSEHCSYKSSKVHLRQFGEKAPQSDAMLVGIGENAGVVDVGQGYAVTFKVESHNHPSYVEPYQGAATGVGGIVRDIIAMGARPVAVVDPLRFGAADHPDTKRVLPGVVAGIGGYGNCLGLPNIGGEVVFDACYQGNPLVNAGAIGVMRHEDIHLAKASGAGNKVILYGARTGGDGIGGASILASETFDDAKPSKRPAVQVGDPFQEKLLIECTLEAFAEKLVVGIQDLGAAGLSCATSELASNGSGGMRVTLDDVPLRDSTLSPEEILMSESQERMCAVVEPEKVDRFLEICDKWDVIATVIGEVTDGDRLEIFWHGGKIVDVDPRTVAHDGPVYERPYARPDWQDALQADDANKLPRPGTSDELKAQVLKLVGSPNQASKQWITQQYDHFVQGNTVLAQPEDSGMIRVDEESGLGVAIATDGNGRYAKLDPYTGAQLALAEAYRNVATTGAKPLAVSDCLNFGSPEDPAVMWQFAEAVRGLADGCLQLGTPVTGGNVSLYNQTGEAAIHPTPVVAVLGVIDDVARRTPVAFQEDGQLLYLLGDTREEFGGSAWSQVIHDHLGGLPPKVDLERERLLGEILISASRDGMIDSAHDLSDGGLVQAVVESALLGGKGARLVVPDGLDAFTFLFSESAGRAVVAVPRSEEVRFNDMCGARGLPVTRIGVVDGDAVEVQGEFTLPLTDLREAHESTIPGLLA</sequence>
<comment type="function">
    <text evidence="1">Part of the phosphoribosylformylglycinamidine synthase complex involved in the purines biosynthetic pathway. Catalyzes the ATP-dependent conversion of formylglycinamide ribonucleotide (FGAR) and glutamine to yield formylglycinamidine ribonucleotide (FGAM) and glutamate. The FGAM synthase complex is composed of three subunits. PurQ produces an ammonia molecule by converting glutamine to glutamate. PurL transfers the ammonia molecule to FGAR to form FGAM in an ATP-dependent manner. PurS interacts with PurQ and PurL and is thought to assist in the transfer of the ammonia molecule from PurQ to PurL.</text>
</comment>
<comment type="catalytic activity">
    <reaction evidence="1">
        <text>N(2)-formyl-N(1)-(5-phospho-beta-D-ribosyl)glycinamide + L-glutamine + ATP + H2O = 2-formamido-N(1)-(5-O-phospho-beta-D-ribosyl)acetamidine + L-glutamate + ADP + phosphate + H(+)</text>
        <dbReference type="Rhea" id="RHEA:17129"/>
        <dbReference type="ChEBI" id="CHEBI:15377"/>
        <dbReference type="ChEBI" id="CHEBI:15378"/>
        <dbReference type="ChEBI" id="CHEBI:29985"/>
        <dbReference type="ChEBI" id="CHEBI:30616"/>
        <dbReference type="ChEBI" id="CHEBI:43474"/>
        <dbReference type="ChEBI" id="CHEBI:58359"/>
        <dbReference type="ChEBI" id="CHEBI:147286"/>
        <dbReference type="ChEBI" id="CHEBI:147287"/>
        <dbReference type="ChEBI" id="CHEBI:456216"/>
        <dbReference type="EC" id="6.3.5.3"/>
    </reaction>
</comment>
<comment type="pathway">
    <text evidence="1">Purine metabolism; IMP biosynthesis via de novo pathway; 5-amino-1-(5-phospho-D-ribosyl)imidazole from N(2)-formyl-N(1)-(5-phospho-D-ribosyl)glycinamide: step 1/2.</text>
</comment>
<comment type="subunit">
    <text evidence="1">Monomer. Part of the FGAM synthase complex composed of 1 PurL, 1 PurQ and 2 PurS subunits.</text>
</comment>
<comment type="subcellular location">
    <subcellularLocation>
        <location evidence="1">Cytoplasm</location>
    </subcellularLocation>
</comment>
<comment type="similarity">
    <text evidence="1">Belongs to the FGAMS family.</text>
</comment>
<evidence type="ECO:0000255" key="1">
    <source>
        <dbReference type="HAMAP-Rule" id="MF_00420"/>
    </source>
</evidence>
<name>PURL_STRCO</name>
<gene>
    <name evidence="1" type="primary">purL</name>
    <name type="ordered locus">SCO4079</name>
    <name type="ORF">SCD25.15</name>
</gene>
<proteinExistence type="inferred from homology"/>
<accession>Q9RKK5</accession>
<feature type="chain" id="PRO_0000100494" description="Phosphoribosylformylglycinamidine synthase subunit PurL">
    <location>
        <begin position="1"/>
        <end position="752"/>
    </location>
</feature>
<feature type="active site" evidence="1">
    <location>
        <position position="58"/>
    </location>
</feature>
<feature type="active site" description="Proton acceptor" evidence="1">
    <location>
        <position position="107"/>
    </location>
</feature>
<feature type="binding site" evidence="1">
    <location>
        <position position="61"/>
    </location>
    <ligand>
        <name>ATP</name>
        <dbReference type="ChEBI" id="CHEBI:30616"/>
    </ligand>
</feature>
<feature type="binding site" evidence="1">
    <location>
        <position position="103"/>
    </location>
    <ligand>
        <name>ATP</name>
        <dbReference type="ChEBI" id="CHEBI:30616"/>
    </ligand>
</feature>
<feature type="binding site" evidence="1">
    <location>
        <position position="105"/>
    </location>
    <ligand>
        <name>Mg(2+)</name>
        <dbReference type="ChEBI" id="CHEBI:18420"/>
        <label>1</label>
    </ligand>
</feature>
<feature type="binding site" evidence="1">
    <location>
        <begin position="106"/>
        <end position="109"/>
    </location>
    <ligand>
        <name>substrate</name>
    </ligand>
</feature>
<feature type="binding site" evidence="1">
    <location>
        <position position="128"/>
    </location>
    <ligand>
        <name>substrate</name>
    </ligand>
</feature>
<feature type="binding site" evidence="1">
    <location>
        <position position="129"/>
    </location>
    <ligand>
        <name>Mg(2+)</name>
        <dbReference type="ChEBI" id="CHEBI:18420"/>
        <label>2</label>
    </ligand>
</feature>
<feature type="binding site" evidence="1">
    <location>
        <position position="253"/>
    </location>
    <ligand>
        <name>substrate</name>
    </ligand>
</feature>
<feature type="binding site" evidence="1">
    <location>
        <position position="281"/>
    </location>
    <ligand>
        <name>Mg(2+)</name>
        <dbReference type="ChEBI" id="CHEBI:18420"/>
        <label>2</label>
    </ligand>
</feature>
<feature type="binding site" evidence="1">
    <location>
        <begin position="325"/>
        <end position="327"/>
    </location>
    <ligand>
        <name>substrate</name>
    </ligand>
</feature>
<feature type="binding site" evidence="1">
    <location>
        <position position="513"/>
    </location>
    <ligand>
        <name>ATP</name>
        <dbReference type="ChEBI" id="CHEBI:30616"/>
    </ligand>
</feature>
<feature type="binding site" evidence="1">
    <location>
        <position position="550"/>
    </location>
    <ligand>
        <name>ATP</name>
        <dbReference type="ChEBI" id="CHEBI:30616"/>
    </ligand>
</feature>
<feature type="binding site" evidence="1">
    <location>
        <position position="551"/>
    </location>
    <ligand>
        <name>Mg(2+)</name>
        <dbReference type="ChEBI" id="CHEBI:18420"/>
        <label>1</label>
    </ligand>
</feature>
<feature type="binding site" evidence="1">
    <location>
        <position position="553"/>
    </location>
    <ligand>
        <name>substrate</name>
    </ligand>
</feature>
<reference key="1">
    <citation type="journal article" date="2002" name="Nature">
        <title>Complete genome sequence of the model actinomycete Streptomyces coelicolor A3(2).</title>
        <authorList>
            <person name="Bentley S.D."/>
            <person name="Chater K.F."/>
            <person name="Cerdeno-Tarraga A.-M."/>
            <person name="Challis G.L."/>
            <person name="Thomson N.R."/>
            <person name="James K.D."/>
            <person name="Harris D.E."/>
            <person name="Quail M.A."/>
            <person name="Kieser H."/>
            <person name="Harper D."/>
            <person name="Bateman A."/>
            <person name="Brown S."/>
            <person name="Chandra G."/>
            <person name="Chen C.W."/>
            <person name="Collins M."/>
            <person name="Cronin A."/>
            <person name="Fraser A."/>
            <person name="Goble A."/>
            <person name="Hidalgo J."/>
            <person name="Hornsby T."/>
            <person name="Howarth S."/>
            <person name="Huang C.-H."/>
            <person name="Kieser T."/>
            <person name="Larke L."/>
            <person name="Murphy L.D."/>
            <person name="Oliver K."/>
            <person name="O'Neil S."/>
            <person name="Rabbinowitsch E."/>
            <person name="Rajandream M.A."/>
            <person name="Rutherford K.M."/>
            <person name="Rutter S."/>
            <person name="Seeger K."/>
            <person name="Saunders D."/>
            <person name="Sharp S."/>
            <person name="Squares R."/>
            <person name="Squares S."/>
            <person name="Taylor K."/>
            <person name="Warren T."/>
            <person name="Wietzorrek A."/>
            <person name="Woodward J.R."/>
            <person name="Barrell B.G."/>
            <person name="Parkhill J."/>
            <person name="Hopwood D.A."/>
        </authorList>
    </citation>
    <scope>NUCLEOTIDE SEQUENCE [LARGE SCALE GENOMIC DNA]</scope>
    <source>
        <strain>ATCC BAA-471 / A3(2) / M145</strain>
    </source>
</reference>